<accession>A0R4D0</accession>
<accession>I7G8U6</accession>
<organism>
    <name type="scientific">Mycolicibacterium smegmatis (strain ATCC 700084 / mc(2)155)</name>
    <name type="common">Mycobacterium smegmatis</name>
    <dbReference type="NCBI Taxonomy" id="246196"/>
    <lineage>
        <taxon>Bacteria</taxon>
        <taxon>Bacillati</taxon>
        <taxon>Actinomycetota</taxon>
        <taxon>Actinomycetes</taxon>
        <taxon>Mycobacteriales</taxon>
        <taxon>Mycobacteriaceae</taxon>
        <taxon>Mycolicibacterium</taxon>
    </lineage>
</organism>
<sequence length="90" mass="9050">MPAGVDLEKETVITGRVVDGSGQAVGGAFVRLLDGSDEFTAEVVASATGDFRFFAAPGTWTVRALSSAGNGNVTVAPTGAGIHEVDVKVA</sequence>
<dbReference type="EMBL" id="CP000480">
    <property type="protein sequence ID" value="ABK70882.1"/>
    <property type="molecule type" value="Genomic_DNA"/>
</dbReference>
<dbReference type="EMBL" id="CP001663">
    <property type="protein sequence ID" value="AFP42072.1"/>
    <property type="status" value="ALT_INIT"/>
    <property type="molecule type" value="Genomic_DNA"/>
</dbReference>
<dbReference type="RefSeq" id="YP_890018.1">
    <property type="nucleotide sequence ID" value="NC_008596.1"/>
</dbReference>
<dbReference type="SMR" id="A0R4D0"/>
<dbReference type="STRING" id="246196.MSMEG_5790"/>
<dbReference type="PaxDb" id="246196-MSMEI_5637"/>
<dbReference type="KEGG" id="msg:MSMEI_5637"/>
<dbReference type="KEGG" id="msm:MSMEG_5790"/>
<dbReference type="PATRIC" id="fig|246196.19.peg.5635"/>
<dbReference type="eggNOG" id="ENOG5032Y6I">
    <property type="taxonomic scope" value="Bacteria"/>
</dbReference>
<dbReference type="OrthoDB" id="3729294at2"/>
<dbReference type="Proteomes" id="UP000000757">
    <property type="component" value="Chromosome"/>
</dbReference>
<dbReference type="Proteomes" id="UP000006158">
    <property type="component" value="Chromosome"/>
</dbReference>
<dbReference type="Gene3D" id="2.60.40.1120">
    <property type="entry name" value="Carboxypeptidase-like, regulatory domain"/>
    <property type="match status" value="1"/>
</dbReference>
<dbReference type="InterPro" id="IPR008969">
    <property type="entry name" value="CarboxyPept-like_regulatory"/>
</dbReference>
<dbReference type="InterPro" id="IPR010814">
    <property type="entry name" value="DUF1416"/>
</dbReference>
<dbReference type="Pfam" id="PF07210">
    <property type="entry name" value="DUF1416"/>
    <property type="match status" value="1"/>
</dbReference>
<dbReference type="SUPFAM" id="SSF49464">
    <property type="entry name" value="Carboxypeptidase regulatory domain-like"/>
    <property type="match status" value="1"/>
</dbReference>
<gene>
    <name type="ordered locus">MSMEG_5790</name>
    <name type="ordered locus">MSMEI_5637</name>
</gene>
<evidence type="ECO:0000269" key="1">
    <source>
    </source>
</evidence>
<evidence type="ECO:0000305" key="2"/>
<protein>
    <recommendedName>
        <fullName>Uncharacterized protein MSMEG_5790/MSMEI_5637</fullName>
    </recommendedName>
</protein>
<comment type="sequence caution" evidence="2">
    <conflict type="erroneous initiation">
        <sequence resource="EMBL-CDS" id="AFP42072"/>
    </conflict>
    <text>Extended N-terminus.</text>
</comment>
<feature type="chain" id="PRO_0000396089" description="Uncharacterized protein MSMEG_5790/MSMEI_5637">
    <location>
        <begin position="1"/>
        <end position="90"/>
    </location>
</feature>
<feature type="cross-link" description="Isoglutamyl lysine isopeptide (Lys-Gln) (interchain with Q-Cter in protein Pup)" evidence="1">
    <location>
        <position position="88"/>
    </location>
</feature>
<name>Y5790_MYCS2</name>
<keyword id="KW-1017">Isopeptide bond</keyword>
<keyword id="KW-1185">Reference proteome</keyword>
<keyword id="KW-0832">Ubl conjugation</keyword>
<proteinExistence type="evidence at protein level"/>
<reference key="1">
    <citation type="submission" date="2006-10" db="EMBL/GenBank/DDBJ databases">
        <authorList>
            <person name="Fleischmann R.D."/>
            <person name="Dodson R.J."/>
            <person name="Haft D.H."/>
            <person name="Merkel J.S."/>
            <person name="Nelson W.C."/>
            <person name="Fraser C.M."/>
        </authorList>
    </citation>
    <scope>NUCLEOTIDE SEQUENCE [LARGE SCALE GENOMIC DNA]</scope>
    <source>
        <strain>ATCC 700084 / mc(2)155</strain>
    </source>
</reference>
<reference key="2">
    <citation type="journal article" date="2007" name="Genome Biol.">
        <title>Interrupted coding sequences in Mycobacterium smegmatis: authentic mutations or sequencing errors?</title>
        <authorList>
            <person name="Deshayes C."/>
            <person name="Perrodou E."/>
            <person name="Gallien S."/>
            <person name="Euphrasie D."/>
            <person name="Schaeffer C."/>
            <person name="Van-Dorsselaer A."/>
            <person name="Poch O."/>
            <person name="Lecompte O."/>
            <person name="Reyrat J.-M."/>
        </authorList>
    </citation>
    <scope>NUCLEOTIDE SEQUENCE [LARGE SCALE GENOMIC DNA]</scope>
    <source>
        <strain>ATCC 700084 / mc(2)155</strain>
    </source>
</reference>
<reference key="3">
    <citation type="journal article" date="2009" name="Genome Res.">
        <title>Ortho-proteogenomics: multiple proteomes investigation through orthology and a new MS-based protocol.</title>
        <authorList>
            <person name="Gallien S."/>
            <person name="Perrodou E."/>
            <person name="Carapito C."/>
            <person name="Deshayes C."/>
            <person name="Reyrat J.-M."/>
            <person name="Van Dorsselaer A."/>
            <person name="Poch O."/>
            <person name="Schaeffer C."/>
            <person name="Lecompte O."/>
        </authorList>
    </citation>
    <scope>NUCLEOTIDE SEQUENCE [LARGE SCALE GENOMIC DNA]</scope>
    <source>
        <strain>ATCC 700084 / mc(2)155</strain>
    </source>
</reference>
<reference key="4">
    <citation type="journal article" date="2010" name="Mol. Biosyst.">
        <title>Expansion of the mycobacterial 'PUPylome'.</title>
        <authorList>
            <person name="Watrous J."/>
            <person name="Burns K."/>
            <person name="Liu W.T."/>
            <person name="Patel A."/>
            <person name="Hook V."/>
            <person name="Bafna V."/>
            <person name="Barry C.E. III"/>
            <person name="Bark S."/>
            <person name="Dorrestein P.C."/>
        </authorList>
    </citation>
    <scope>PUPYLATION AT LYS-88</scope>
    <scope>IDENTIFICATION BY MASS SPECTROMETRY</scope>
</reference>